<keyword id="KW-0030">Aminoacyl-tRNA synthetase</keyword>
<keyword id="KW-0067">ATP-binding</keyword>
<keyword id="KW-0963">Cytoplasm</keyword>
<keyword id="KW-0436">Ligase</keyword>
<keyword id="KW-0547">Nucleotide-binding</keyword>
<keyword id="KW-0648">Protein biosynthesis</keyword>
<keyword id="KW-1185">Reference proteome</keyword>
<accession>Q8RGA3</accession>
<dbReference type="EC" id="6.1.1.2" evidence="1"/>
<dbReference type="EMBL" id="AE009951">
    <property type="protein sequence ID" value="AAL94608.1"/>
    <property type="molecule type" value="Genomic_DNA"/>
</dbReference>
<dbReference type="RefSeq" id="NP_603309.1">
    <property type="nucleotide sequence ID" value="NC_003454.1"/>
</dbReference>
<dbReference type="RefSeq" id="WP_011016366.1">
    <property type="nucleotide sequence ID" value="NZ_OZ209243.1"/>
</dbReference>
<dbReference type="SMR" id="Q8RGA3"/>
<dbReference type="FunCoup" id="Q8RGA3">
    <property type="interactions" value="321"/>
</dbReference>
<dbReference type="STRING" id="190304.FN0405"/>
<dbReference type="PaxDb" id="190304-FN0405"/>
<dbReference type="EnsemblBacteria" id="AAL94608">
    <property type="protein sequence ID" value="AAL94608"/>
    <property type="gene ID" value="FN0405"/>
</dbReference>
<dbReference type="GeneID" id="79783411"/>
<dbReference type="KEGG" id="fnu:FN0405"/>
<dbReference type="PATRIC" id="fig|190304.8.peg.980"/>
<dbReference type="eggNOG" id="COG0180">
    <property type="taxonomic scope" value="Bacteria"/>
</dbReference>
<dbReference type="HOGENOM" id="CLU_029244_5_0_0"/>
<dbReference type="InParanoid" id="Q8RGA3"/>
<dbReference type="BioCyc" id="FNUC190304:G1FZS-999-MONOMER"/>
<dbReference type="Proteomes" id="UP000002521">
    <property type="component" value="Chromosome"/>
</dbReference>
<dbReference type="GO" id="GO:0005829">
    <property type="term" value="C:cytosol"/>
    <property type="evidence" value="ECO:0000318"/>
    <property type="project" value="GO_Central"/>
</dbReference>
<dbReference type="GO" id="GO:0005524">
    <property type="term" value="F:ATP binding"/>
    <property type="evidence" value="ECO:0007669"/>
    <property type="project" value="UniProtKB-UniRule"/>
</dbReference>
<dbReference type="GO" id="GO:0004830">
    <property type="term" value="F:tryptophan-tRNA ligase activity"/>
    <property type="evidence" value="ECO:0000318"/>
    <property type="project" value="GO_Central"/>
</dbReference>
<dbReference type="GO" id="GO:0006436">
    <property type="term" value="P:tryptophanyl-tRNA aminoacylation"/>
    <property type="evidence" value="ECO:0000318"/>
    <property type="project" value="GO_Central"/>
</dbReference>
<dbReference type="CDD" id="cd00806">
    <property type="entry name" value="TrpRS_core"/>
    <property type="match status" value="1"/>
</dbReference>
<dbReference type="FunFam" id="1.10.240.10:FF:000005">
    <property type="entry name" value="Tryptophan--tRNA ligase"/>
    <property type="match status" value="1"/>
</dbReference>
<dbReference type="Gene3D" id="3.40.50.620">
    <property type="entry name" value="HUPs"/>
    <property type="match status" value="1"/>
</dbReference>
<dbReference type="Gene3D" id="1.10.240.10">
    <property type="entry name" value="Tyrosyl-Transfer RNA Synthetase"/>
    <property type="match status" value="1"/>
</dbReference>
<dbReference type="HAMAP" id="MF_00140_B">
    <property type="entry name" value="Trp_tRNA_synth_B"/>
    <property type="match status" value="1"/>
</dbReference>
<dbReference type="InterPro" id="IPR001412">
    <property type="entry name" value="aa-tRNA-synth_I_CS"/>
</dbReference>
<dbReference type="InterPro" id="IPR002305">
    <property type="entry name" value="aa-tRNA-synth_Ic"/>
</dbReference>
<dbReference type="InterPro" id="IPR014729">
    <property type="entry name" value="Rossmann-like_a/b/a_fold"/>
</dbReference>
<dbReference type="InterPro" id="IPR002306">
    <property type="entry name" value="Trp-tRNA-ligase"/>
</dbReference>
<dbReference type="InterPro" id="IPR024109">
    <property type="entry name" value="Trp-tRNA-ligase_bac-type"/>
</dbReference>
<dbReference type="InterPro" id="IPR050203">
    <property type="entry name" value="Trp-tRNA_synthetase"/>
</dbReference>
<dbReference type="NCBIfam" id="TIGR00233">
    <property type="entry name" value="trpS"/>
    <property type="match status" value="1"/>
</dbReference>
<dbReference type="PANTHER" id="PTHR43766">
    <property type="entry name" value="TRYPTOPHAN--TRNA LIGASE, MITOCHONDRIAL"/>
    <property type="match status" value="1"/>
</dbReference>
<dbReference type="PANTHER" id="PTHR43766:SF1">
    <property type="entry name" value="TRYPTOPHAN--TRNA LIGASE, MITOCHONDRIAL"/>
    <property type="match status" value="1"/>
</dbReference>
<dbReference type="Pfam" id="PF00579">
    <property type="entry name" value="tRNA-synt_1b"/>
    <property type="match status" value="1"/>
</dbReference>
<dbReference type="PRINTS" id="PR01039">
    <property type="entry name" value="TRNASYNTHTRP"/>
</dbReference>
<dbReference type="SUPFAM" id="SSF52374">
    <property type="entry name" value="Nucleotidylyl transferase"/>
    <property type="match status" value="1"/>
</dbReference>
<dbReference type="PROSITE" id="PS00178">
    <property type="entry name" value="AA_TRNA_LIGASE_I"/>
    <property type="match status" value="1"/>
</dbReference>
<comment type="function">
    <text evidence="1">Catalyzes the attachment of tryptophan to tRNA(Trp).</text>
</comment>
<comment type="catalytic activity">
    <reaction evidence="1">
        <text>tRNA(Trp) + L-tryptophan + ATP = L-tryptophyl-tRNA(Trp) + AMP + diphosphate + H(+)</text>
        <dbReference type="Rhea" id="RHEA:24080"/>
        <dbReference type="Rhea" id="RHEA-COMP:9671"/>
        <dbReference type="Rhea" id="RHEA-COMP:9705"/>
        <dbReference type="ChEBI" id="CHEBI:15378"/>
        <dbReference type="ChEBI" id="CHEBI:30616"/>
        <dbReference type="ChEBI" id="CHEBI:33019"/>
        <dbReference type="ChEBI" id="CHEBI:57912"/>
        <dbReference type="ChEBI" id="CHEBI:78442"/>
        <dbReference type="ChEBI" id="CHEBI:78535"/>
        <dbReference type="ChEBI" id="CHEBI:456215"/>
        <dbReference type="EC" id="6.1.1.2"/>
    </reaction>
</comment>
<comment type="subunit">
    <text evidence="1">Homodimer.</text>
</comment>
<comment type="subcellular location">
    <subcellularLocation>
        <location evidence="1">Cytoplasm</location>
    </subcellularLocation>
</comment>
<comment type="similarity">
    <text evidence="1">Belongs to the class-I aminoacyl-tRNA synthetase family.</text>
</comment>
<name>SYW_FUSNN</name>
<reference key="1">
    <citation type="journal article" date="2002" name="J. Bacteriol.">
        <title>Genome sequence and analysis of the oral bacterium Fusobacterium nucleatum strain ATCC 25586.</title>
        <authorList>
            <person name="Kapatral V."/>
            <person name="Anderson I."/>
            <person name="Ivanova N."/>
            <person name="Reznik G."/>
            <person name="Los T."/>
            <person name="Lykidis A."/>
            <person name="Bhattacharyya A."/>
            <person name="Bartman A."/>
            <person name="Gardner W."/>
            <person name="Grechkin G."/>
            <person name="Zhu L."/>
            <person name="Vasieva O."/>
            <person name="Chu L."/>
            <person name="Kogan Y."/>
            <person name="Chaga O."/>
            <person name="Goltsman E."/>
            <person name="Bernal A."/>
            <person name="Larsen N."/>
            <person name="D'Souza M."/>
            <person name="Walunas T."/>
            <person name="Pusch G."/>
            <person name="Haselkorn R."/>
            <person name="Fonstein M."/>
            <person name="Kyrpides N.C."/>
            <person name="Overbeek R."/>
        </authorList>
    </citation>
    <scope>NUCLEOTIDE SEQUENCE [LARGE SCALE GENOMIC DNA]</scope>
    <source>
        <strain>ATCC 25586 / DSM 15643 / BCRC 10681 / CIP 101130 / JCM 8532 / KCTC 2640 / LMG 13131 / VPI 4355</strain>
    </source>
</reference>
<sequence>MKRSLSGIQPSGILHIGNYFGAMKQFVDLQDSYDGFYFIADYHSLTSLTKAETLKENTYNIVLDYLAVGLDPSKSTIFLQSNVPEHTELTWLLSNITPVGLLERGHSYKDKIAKGIPSNTGLLTYPVLMAADILIYDSDVVPVGKDQKQHLEMTRDIAMKFNQQYGVEFFKLPEPLILDDSAIVPGTDGQKMSKSYNNTINMFATKKKLKEQVMSIVTDSTPLEEPKNPDNNIAKIYALFNNIDKQNELKDKFLAGNFGYGHAKTELLNSILEYFGTAREKREELEKNMDYVKDVLNEGSKKARTIAIEKIKKAKEIVGLVGNIY</sequence>
<evidence type="ECO:0000255" key="1">
    <source>
        <dbReference type="HAMAP-Rule" id="MF_00140"/>
    </source>
</evidence>
<proteinExistence type="inferred from homology"/>
<gene>
    <name evidence="1" type="primary">trpS</name>
    <name type="ordered locus">FN0405</name>
</gene>
<feature type="chain" id="PRO_0000136632" description="Tryptophan--tRNA ligase">
    <location>
        <begin position="1"/>
        <end position="325"/>
    </location>
</feature>
<feature type="short sequence motif" description="'HIGH' region" evidence="1">
    <location>
        <begin position="10"/>
        <end position="18"/>
    </location>
</feature>
<feature type="short sequence motif" description="'KMSKS' region" evidence="1">
    <location>
        <begin position="191"/>
        <end position="195"/>
    </location>
</feature>
<feature type="binding site" evidence="1">
    <location>
        <begin position="9"/>
        <end position="11"/>
    </location>
    <ligand>
        <name>ATP</name>
        <dbReference type="ChEBI" id="CHEBI:30616"/>
    </ligand>
</feature>
<feature type="binding site" evidence="1">
    <location>
        <begin position="17"/>
        <end position="18"/>
    </location>
    <ligand>
        <name>ATP</name>
        <dbReference type="ChEBI" id="CHEBI:30616"/>
    </ligand>
</feature>
<feature type="binding site" evidence="1">
    <location>
        <position position="132"/>
    </location>
    <ligand>
        <name>L-tryptophan</name>
        <dbReference type="ChEBI" id="CHEBI:57912"/>
    </ligand>
</feature>
<feature type="binding site" evidence="1">
    <location>
        <begin position="144"/>
        <end position="146"/>
    </location>
    <ligand>
        <name>ATP</name>
        <dbReference type="ChEBI" id="CHEBI:30616"/>
    </ligand>
</feature>
<feature type="binding site" evidence="1">
    <location>
        <position position="184"/>
    </location>
    <ligand>
        <name>ATP</name>
        <dbReference type="ChEBI" id="CHEBI:30616"/>
    </ligand>
</feature>
<feature type="binding site" evidence="1">
    <location>
        <begin position="191"/>
        <end position="195"/>
    </location>
    <ligand>
        <name>ATP</name>
        <dbReference type="ChEBI" id="CHEBI:30616"/>
    </ligand>
</feature>
<organism>
    <name type="scientific">Fusobacterium nucleatum subsp. nucleatum (strain ATCC 25586 / DSM 15643 / BCRC 10681 / CIP 101130 / JCM 8532 / KCTC 2640 / LMG 13131 / VPI 4355)</name>
    <dbReference type="NCBI Taxonomy" id="190304"/>
    <lineage>
        <taxon>Bacteria</taxon>
        <taxon>Fusobacteriati</taxon>
        <taxon>Fusobacteriota</taxon>
        <taxon>Fusobacteriia</taxon>
        <taxon>Fusobacteriales</taxon>
        <taxon>Fusobacteriaceae</taxon>
        <taxon>Fusobacterium</taxon>
    </lineage>
</organism>
<protein>
    <recommendedName>
        <fullName evidence="1">Tryptophan--tRNA ligase</fullName>
        <ecNumber evidence="1">6.1.1.2</ecNumber>
    </recommendedName>
    <alternativeName>
        <fullName evidence="1">Tryptophanyl-tRNA synthetase</fullName>
        <shortName evidence="1">TrpRS</shortName>
    </alternativeName>
</protein>